<dbReference type="EC" id="7.-.-.-" evidence="1"/>
<dbReference type="EMBL" id="AM295007">
    <property type="protein sequence ID" value="CAM31143.1"/>
    <property type="molecule type" value="Genomic_DNA"/>
</dbReference>
<dbReference type="RefSeq" id="WP_002992388.1">
    <property type="nucleotide sequence ID" value="NC_009332.1"/>
</dbReference>
<dbReference type="SMR" id="A2RH11"/>
<dbReference type="KEGG" id="spf:SpyM51818"/>
<dbReference type="HOGENOM" id="CLU_000604_1_22_9"/>
<dbReference type="GO" id="GO:0043190">
    <property type="term" value="C:ATP-binding cassette (ABC) transporter complex"/>
    <property type="evidence" value="ECO:0007669"/>
    <property type="project" value="TreeGrafter"/>
</dbReference>
<dbReference type="GO" id="GO:0005524">
    <property type="term" value="F:ATP binding"/>
    <property type="evidence" value="ECO:0007669"/>
    <property type="project" value="UniProtKB-KW"/>
</dbReference>
<dbReference type="GO" id="GO:0016887">
    <property type="term" value="F:ATP hydrolysis activity"/>
    <property type="evidence" value="ECO:0007669"/>
    <property type="project" value="InterPro"/>
</dbReference>
<dbReference type="GO" id="GO:0042626">
    <property type="term" value="F:ATPase-coupled transmembrane transporter activity"/>
    <property type="evidence" value="ECO:0007669"/>
    <property type="project" value="TreeGrafter"/>
</dbReference>
<dbReference type="CDD" id="cd03225">
    <property type="entry name" value="ABC_cobalt_CbiO_domain1"/>
    <property type="match status" value="1"/>
</dbReference>
<dbReference type="FunFam" id="3.40.50.300:FF:000224">
    <property type="entry name" value="Energy-coupling factor transporter ATP-binding protein EcfA"/>
    <property type="match status" value="1"/>
</dbReference>
<dbReference type="Gene3D" id="3.40.50.300">
    <property type="entry name" value="P-loop containing nucleotide triphosphate hydrolases"/>
    <property type="match status" value="1"/>
</dbReference>
<dbReference type="InterPro" id="IPR003593">
    <property type="entry name" value="AAA+_ATPase"/>
</dbReference>
<dbReference type="InterPro" id="IPR003439">
    <property type="entry name" value="ABC_transporter-like_ATP-bd"/>
</dbReference>
<dbReference type="InterPro" id="IPR017871">
    <property type="entry name" value="ABC_transporter-like_CS"/>
</dbReference>
<dbReference type="InterPro" id="IPR015856">
    <property type="entry name" value="ABC_transpr_CbiO/EcfA_su"/>
</dbReference>
<dbReference type="InterPro" id="IPR050095">
    <property type="entry name" value="ECF_ABC_transporter_ATP-bd"/>
</dbReference>
<dbReference type="InterPro" id="IPR030947">
    <property type="entry name" value="EcfA_1"/>
</dbReference>
<dbReference type="InterPro" id="IPR027417">
    <property type="entry name" value="P-loop_NTPase"/>
</dbReference>
<dbReference type="NCBIfam" id="TIGR04520">
    <property type="entry name" value="ECF_ATPase_1"/>
    <property type="match status" value="1"/>
</dbReference>
<dbReference type="NCBIfam" id="NF010156">
    <property type="entry name" value="PRK13635.1"/>
    <property type="match status" value="1"/>
</dbReference>
<dbReference type="NCBIfam" id="NF010167">
    <property type="entry name" value="PRK13648.1"/>
    <property type="match status" value="1"/>
</dbReference>
<dbReference type="PANTHER" id="PTHR43553:SF24">
    <property type="entry name" value="ENERGY-COUPLING FACTOR TRANSPORTER ATP-BINDING PROTEIN ECFA1"/>
    <property type="match status" value="1"/>
</dbReference>
<dbReference type="PANTHER" id="PTHR43553">
    <property type="entry name" value="HEAVY METAL TRANSPORTER"/>
    <property type="match status" value="1"/>
</dbReference>
<dbReference type="Pfam" id="PF00005">
    <property type="entry name" value="ABC_tran"/>
    <property type="match status" value="1"/>
</dbReference>
<dbReference type="SMART" id="SM00382">
    <property type="entry name" value="AAA"/>
    <property type="match status" value="1"/>
</dbReference>
<dbReference type="SUPFAM" id="SSF52540">
    <property type="entry name" value="P-loop containing nucleoside triphosphate hydrolases"/>
    <property type="match status" value="1"/>
</dbReference>
<dbReference type="PROSITE" id="PS00211">
    <property type="entry name" value="ABC_TRANSPORTER_1"/>
    <property type="match status" value="1"/>
</dbReference>
<dbReference type="PROSITE" id="PS50893">
    <property type="entry name" value="ABC_TRANSPORTER_2"/>
    <property type="match status" value="1"/>
</dbReference>
<dbReference type="PROSITE" id="PS51246">
    <property type="entry name" value="CBIO"/>
    <property type="match status" value="1"/>
</dbReference>
<comment type="function">
    <text evidence="1">ATP-binding (A) component of a common energy-coupling factor (ECF) ABC-transporter complex. Unlike classic ABC transporters this ECF transporter provides the energy necessary to transport a number of different substrates.</text>
</comment>
<comment type="subunit">
    <text evidence="1">Forms a stable energy-coupling factor (ECF) transporter complex composed of 2 membrane-embedded substrate-binding proteins (S component), 2 ATP-binding proteins (A component) and 2 transmembrane proteins (T component).</text>
</comment>
<comment type="subcellular location">
    <subcellularLocation>
        <location evidence="1">Cell membrane</location>
        <topology evidence="1">Peripheral membrane protein</topology>
    </subcellularLocation>
</comment>
<comment type="similarity">
    <text evidence="1">Belongs to the ABC transporter superfamily. Energy-coupling factor EcfA family.</text>
</comment>
<protein>
    <recommendedName>
        <fullName evidence="1">Energy-coupling factor transporter ATP-binding protein EcfA1</fullName>
        <shortName evidence="1">ECF transporter A component EcfA1</shortName>
        <ecNumber evidence="1">7.-.-.-</ecNumber>
    </recommendedName>
</protein>
<sequence>MSAIIELKKVTFNYHKDQEKPTLDGVSFHVKQGEWLSIIGHNGSGKSTTIRLIDGLLEPESGSIIVDGDLLTITNVWEIRHKIGMVFQNPDNQFVGATVEDDVAFGLENKGIAHEDIKERVNHALELVGMQNFKEKEPARLSGGQKQRVAIAGAVAMKPKIIILDEATSMLDPKGRLELIKTIKNIRDDYQLTVISITHDLDEVALSDRVLVMKDGQVESTSTPEQLFARGDELLQLGLDIPFTTSVVQMLQEEGYPIDYGYLTEKELENQLCQLISKM</sequence>
<reference key="1">
    <citation type="journal article" date="2007" name="J. Bacteriol.">
        <title>Complete genome of acute rheumatic fever-associated serotype M5 Streptococcus pyogenes strain Manfredo.</title>
        <authorList>
            <person name="Holden M.T.G."/>
            <person name="Scott A."/>
            <person name="Cherevach I."/>
            <person name="Chillingworth T."/>
            <person name="Churcher C."/>
            <person name="Cronin A."/>
            <person name="Dowd L."/>
            <person name="Feltwell T."/>
            <person name="Hamlin N."/>
            <person name="Holroyd S."/>
            <person name="Jagels K."/>
            <person name="Moule S."/>
            <person name="Mungall K."/>
            <person name="Quail M.A."/>
            <person name="Price C."/>
            <person name="Rabbinowitsch E."/>
            <person name="Sharp S."/>
            <person name="Skelton J."/>
            <person name="Whitehead S."/>
            <person name="Barrell B.G."/>
            <person name="Kehoe M."/>
            <person name="Parkhill J."/>
        </authorList>
    </citation>
    <scope>NUCLEOTIDE SEQUENCE [LARGE SCALE GENOMIC DNA]</scope>
    <source>
        <strain>Manfredo</strain>
    </source>
</reference>
<accession>A2RH11</accession>
<keyword id="KW-0067">ATP-binding</keyword>
<keyword id="KW-1003">Cell membrane</keyword>
<keyword id="KW-0472">Membrane</keyword>
<keyword id="KW-0547">Nucleotide-binding</keyword>
<keyword id="KW-1278">Translocase</keyword>
<keyword id="KW-0813">Transport</keyword>
<organism>
    <name type="scientific">Streptococcus pyogenes serotype M5 (strain Manfredo)</name>
    <dbReference type="NCBI Taxonomy" id="160491"/>
    <lineage>
        <taxon>Bacteria</taxon>
        <taxon>Bacillati</taxon>
        <taxon>Bacillota</taxon>
        <taxon>Bacilli</taxon>
        <taxon>Lactobacillales</taxon>
        <taxon>Streptococcaceae</taxon>
        <taxon>Streptococcus</taxon>
    </lineage>
</organism>
<name>ECFA1_STRPG</name>
<gene>
    <name evidence="1" type="primary">ecfA1</name>
    <name type="synonym">cbiO1</name>
    <name type="ordered locus">SpyM51818</name>
</gene>
<feature type="chain" id="PRO_0000288006" description="Energy-coupling factor transporter ATP-binding protein EcfA1">
    <location>
        <begin position="1"/>
        <end position="279"/>
    </location>
</feature>
<feature type="domain" description="ABC transporter" evidence="1">
    <location>
        <begin position="5"/>
        <end position="240"/>
    </location>
</feature>
<feature type="binding site" evidence="1">
    <location>
        <begin position="40"/>
        <end position="47"/>
    </location>
    <ligand>
        <name>ATP</name>
        <dbReference type="ChEBI" id="CHEBI:30616"/>
    </ligand>
</feature>
<proteinExistence type="inferred from homology"/>
<evidence type="ECO:0000255" key="1">
    <source>
        <dbReference type="HAMAP-Rule" id="MF_01710"/>
    </source>
</evidence>